<dbReference type="EC" id="1.1.1.79" evidence="1"/>
<dbReference type="EC" id="1.1.1.81" evidence="1"/>
<dbReference type="EMBL" id="CP001120">
    <property type="protein sequence ID" value="ACF69371.1"/>
    <property type="molecule type" value="Genomic_DNA"/>
</dbReference>
<dbReference type="RefSeq" id="WP_000402552.1">
    <property type="nucleotide sequence ID" value="NC_011083.1"/>
</dbReference>
<dbReference type="SMR" id="B4TEQ6"/>
<dbReference type="KEGG" id="seh:SeHA_C1245"/>
<dbReference type="HOGENOM" id="CLU_019796_1_0_6"/>
<dbReference type="Proteomes" id="UP000001866">
    <property type="component" value="Chromosome"/>
</dbReference>
<dbReference type="GO" id="GO:0005737">
    <property type="term" value="C:cytoplasm"/>
    <property type="evidence" value="ECO:0007669"/>
    <property type="project" value="UniProtKB-SubCell"/>
</dbReference>
<dbReference type="GO" id="GO:0030267">
    <property type="term" value="F:glyoxylate reductase (NADPH) activity"/>
    <property type="evidence" value="ECO:0007669"/>
    <property type="project" value="UniProtKB-UniRule"/>
</dbReference>
<dbReference type="GO" id="GO:0008465">
    <property type="term" value="F:hydroxypyruvate reductase (NADH) activity"/>
    <property type="evidence" value="ECO:0007669"/>
    <property type="project" value="RHEA"/>
</dbReference>
<dbReference type="GO" id="GO:0120509">
    <property type="term" value="F:hydroxypyruvate reductase (NADPH) activity"/>
    <property type="evidence" value="ECO:0007669"/>
    <property type="project" value="RHEA"/>
</dbReference>
<dbReference type="GO" id="GO:0051287">
    <property type="term" value="F:NAD binding"/>
    <property type="evidence" value="ECO:0007669"/>
    <property type="project" value="InterPro"/>
</dbReference>
<dbReference type="CDD" id="cd12164">
    <property type="entry name" value="GDH_like_2"/>
    <property type="match status" value="1"/>
</dbReference>
<dbReference type="FunFam" id="3.40.50.720:FF:000110">
    <property type="entry name" value="Glyoxylate/hydroxypyruvate reductase A"/>
    <property type="match status" value="1"/>
</dbReference>
<dbReference type="Gene3D" id="3.40.50.720">
    <property type="entry name" value="NAD(P)-binding Rossmann-like Domain"/>
    <property type="match status" value="2"/>
</dbReference>
<dbReference type="HAMAP" id="MF_01666">
    <property type="entry name" value="2_Hacid_dh_C_GhrA"/>
    <property type="match status" value="1"/>
</dbReference>
<dbReference type="InterPro" id="IPR006140">
    <property type="entry name" value="D-isomer_DH_NAD-bd"/>
</dbReference>
<dbReference type="InterPro" id="IPR023514">
    <property type="entry name" value="GhrA_Enterobacterales"/>
</dbReference>
<dbReference type="InterPro" id="IPR036291">
    <property type="entry name" value="NAD(P)-bd_dom_sf"/>
</dbReference>
<dbReference type="NCBIfam" id="NF012013">
    <property type="entry name" value="PRK15469.1"/>
    <property type="match status" value="1"/>
</dbReference>
<dbReference type="PANTHER" id="PTHR43333">
    <property type="entry name" value="2-HACID_DH_C DOMAIN-CONTAINING PROTEIN"/>
    <property type="match status" value="1"/>
</dbReference>
<dbReference type="PANTHER" id="PTHR43333:SF1">
    <property type="entry name" value="D-ISOMER SPECIFIC 2-HYDROXYACID DEHYDROGENASE NAD-BINDING DOMAIN-CONTAINING PROTEIN"/>
    <property type="match status" value="1"/>
</dbReference>
<dbReference type="Pfam" id="PF02826">
    <property type="entry name" value="2-Hacid_dh_C"/>
    <property type="match status" value="1"/>
</dbReference>
<dbReference type="SUPFAM" id="SSF51735">
    <property type="entry name" value="NAD(P)-binding Rossmann-fold domains"/>
    <property type="match status" value="1"/>
</dbReference>
<accession>B4TEQ6</accession>
<evidence type="ECO:0000255" key="1">
    <source>
        <dbReference type="HAMAP-Rule" id="MF_01666"/>
    </source>
</evidence>
<organism>
    <name type="scientific">Salmonella heidelberg (strain SL476)</name>
    <dbReference type="NCBI Taxonomy" id="454169"/>
    <lineage>
        <taxon>Bacteria</taxon>
        <taxon>Pseudomonadati</taxon>
        <taxon>Pseudomonadota</taxon>
        <taxon>Gammaproteobacteria</taxon>
        <taxon>Enterobacterales</taxon>
        <taxon>Enterobacteriaceae</taxon>
        <taxon>Salmonella</taxon>
    </lineage>
</organism>
<protein>
    <recommendedName>
        <fullName evidence="1">Glyoxylate/hydroxypyruvate reductase A</fullName>
        <ecNumber evidence="1">1.1.1.79</ecNumber>
        <ecNumber evidence="1">1.1.1.81</ecNumber>
    </recommendedName>
    <alternativeName>
        <fullName evidence="1">2-ketoacid reductase</fullName>
    </alternativeName>
</protein>
<gene>
    <name evidence="1" type="primary">ghrA</name>
    <name type="ordered locus">SeHA_C1245</name>
</gene>
<reference key="1">
    <citation type="journal article" date="2011" name="J. Bacteriol.">
        <title>Comparative genomics of 28 Salmonella enterica isolates: evidence for CRISPR-mediated adaptive sublineage evolution.</title>
        <authorList>
            <person name="Fricke W.F."/>
            <person name="Mammel M.K."/>
            <person name="McDermott P.F."/>
            <person name="Tartera C."/>
            <person name="White D.G."/>
            <person name="Leclerc J.E."/>
            <person name="Ravel J."/>
            <person name="Cebula T.A."/>
        </authorList>
    </citation>
    <scope>NUCLEOTIDE SEQUENCE [LARGE SCALE GENOMIC DNA]</scope>
    <source>
        <strain>SL476</strain>
    </source>
</reference>
<comment type="function">
    <text evidence="1">Catalyzes the NADPH-dependent reduction of glyoxylate and hydroxypyruvate into glycolate and glycerate, respectively.</text>
</comment>
<comment type="catalytic activity">
    <reaction evidence="1">
        <text>glycolate + NADP(+) = glyoxylate + NADPH + H(+)</text>
        <dbReference type="Rhea" id="RHEA:10992"/>
        <dbReference type="ChEBI" id="CHEBI:15378"/>
        <dbReference type="ChEBI" id="CHEBI:29805"/>
        <dbReference type="ChEBI" id="CHEBI:36655"/>
        <dbReference type="ChEBI" id="CHEBI:57783"/>
        <dbReference type="ChEBI" id="CHEBI:58349"/>
        <dbReference type="EC" id="1.1.1.79"/>
    </reaction>
</comment>
<comment type="catalytic activity">
    <reaction evidence="1">
        <text>(R)-glycerate + NAD(+) = 3-hydroxypyruvate + NADH + H(+)</text>
        <dbReference type="Rhea" id="RHEA:17905"/>
        <dbReference type="ChEBI" id="CHEBI:15378"/>
        <dbReference type="ChEBI" id="CHEBI:16659"/>
        <dbReference type="ChEBI" id="CHEBI:17180"/>
        <dbReference type="ChEBI" id="CHEBI:57540"/>
        <dbReference type="ChEBI" id="CHEBI:57945"/>
        <dbReference type="EC" id="1.1.1.81"/>
    </reaction>
</comment>
<comment type="catalytic activity">
    <reaction evidence="1">
        <text>(R)-glycerate + NADP(+) = 3-hydroxypyruvate + NADPH + H(+)</text>
        <dbReference type="Rhea" id="RHEA:18657"/>
        <dbReference type="ChEBI" id="CHEBI:15378"/>
        <dbReference type="ChEBI" id="CHEBI:16659"/>
        <dbReference type="ChEBI" id="CHEBI:17180"/>
        <dbReference type="ChEBI" id="CHEBI:57783"/>
        <dbReference type="ChEBI" id="CHEBI:58349"/>
        <dbReference type="EC" id="1.1.1.81"/>
    </reaction>
</comment>
<comment type="subcellular location">
    <subcellularLocation>
        <location evidence="1">Cytoplasm</location>
    </subcellularLocation>
</comment>
<comment type="similarity">
    <text evidence="1">Belongs to the D-isomer specific 2-hydroxyacid dehydrogenase family. GhrA subfamily.</text>
</comment>
<sequence>MEIIFYHPTFNAAWWVNALEKALPHARVREWKVGDNNPADYALVWQPPVEMLAGRRLKAVFALGAGVDAILSKLNAHPEMLDASIPLFRLEDTGMGLQMQEYAVSQVLHWFRRFDDYQALKNQALWKPLPEYTREEFSVGIMGAGVLGAKVAESLQAWGFPLRCWSRSRKSWPGVESYVGREELRAFLNQTRVLINLLPNTAQTVGIINSELLDQLPDGAYVLNLARGVHVQEADLLAALDSGKLKGAMLDVFSQEPLPQESPLWRHPRVAMTPHIAAVTRPAEAIDYISRTITQLEKGEPVTGQVDRARGY</sequence>
<keyword id="KW-0963">Cytoplasm</keyword>
<keyword id="KW-0520">NAD</keyword>
<keyword id="KW-0521">NADP</keyword>
<keyword id="KW-0560">Oxidoreductase</keyword>
<name>GHRA_SALHS</name>
<feature type="chain" id="PRO_1000187277" description="Glyoxylate/hydroxypyruvate reductase A">
    <location>
        <begin position="1"/>
        <end position="312"/>
    </location>
</feature>
<feature type="active site" evidence="1">
    <location>
        <position position="227"/>
    </location>
</feature>
<feature type="active site" description="Proton donor" evidence="1">
    <location>
        <position position="275"/>
    </location>
</feature>
<proteinExistence type="inferred from homology"/>